<dbReference type="EC" id="6.3.2.3" evidence="2"/>
<dbReference type="EMBL" id="AE016826">
    <property type="protein sequence ID" value="AAO27195.1"/>
    <property type="molecule type" value="Genomic_DNA"/>
</dbReference>
<dbReference type="RefSeq" id="WP_011091596.1">
    <property type="nucleotide sequence ID" value="NC_004545.1"/>
</dbReference>
<dbReference type="SMR" id="P59495"/>
<dbReference type="STRING" id="224915.bbp_490"/>
<dbReference type="KEGG" id="bab:bbp_490"/>
<dbReference type="eggNOG" id="COG0189">
    <property type="taxonomic scope" value="Bacteria"/>
</dbReference>
<dbReference type="HOGENOM" id="CLU_068239_0_0_6"/>
<dbReference type="OrthoDB" id="9785415at2"/>
<dbReference type="UniPathway" id="UPA00142">
    <property type="reaction ID" value="UER00210"/>
</dbReference>
<dbReference type="Proteomes" id="UP000000601">
    <property type="component" value="Chromosome"/>
</dbReference>
<dbReference type="GO" id="GO:0005737">
    <property type="term" value="C:cytoplasm"/>
    <property type="evidence" value="ECO:0007669"/>
    <property type="project" value="TreeGrafter"/>
</dbReference>
<dbReference type="GO" id="GO:0005524">
    <property type="term" value="F:ATP binding"/>
    <property type="evidence" value="ECO:0007669"/>
    <property type="project" value="UniProtKB-UniRule"/>
</dbReference>
<dbReference type="GO" id="GO:0004363">
    <property type="term" value="F:glutathione synthase activity"/>
    <property type="evidence" value="ECO:0007669"/>
    <property type="project" value="UniProtKB-UniRule"/>
</dbReference>
<dbReference type="GO" id="GO:0046872">
    <property type="term" value="F:metal ion binding"/>
    <property type="evidence" value="ECO:0007669"/>
    <property type="project" value="UniProtKB-KW"/>
</dbReference>
<dbReference type="FunFam" id="3.40.50.20:FF:000009">
    <property type="entry name" value="Glutathione synthetase"/>
    <property type="match status" value="1"/>
</dbReference>
<dbReference type="Gene3D" id="3.40.50.20">
    <property type="match status" value="1"/>
</dbReference>
<dbReference type="Gene3D" id="3.30.1490.20">
    <property type="entry name" value="ATP-grasp fold, A domain"/>
    <property type="match status" value="1"/>
</dbReference>
<dbReference type="Gene3D" id="3.30.470.20">
    <property type="entry name" value="ATP-grasp fold, B domain"/>
    <property type="match status" value="1"/>
</dbReference>
<dbReference type="HAMAP" id="MF_00162">
    <property type="entry name" value="GSH_S"/>
    <property type="match status" value="1"/>
</dbReference>
<dbReference type="InterPro" id="IPR011761">
    <property type="entry name" value="ATP-grasp"/>
</dbReference>
<dbReference type="InterPro" id="IPR013815">
    <property type="entry name" value="ATP_grasp_subdomain_1"/>
</dbReference>
<dbReference type="InterPro" id="IPR006284">
    <property type="entry name" value="Glut_synth_pro"/>
</dbReference>
<dbReference type="InterPro" id="IPR004218">
    <property type="entry name" value="GSHS_ATP-bd"/>
</dbReference>
<dbReference type="InterPro" id="IPR004215">
    <property type="entry name" value="GSHS_N"/>
</dbReference>
<dbReference type="InterPro" id="IPR016185">
    <property type="entry name" value="PreATP-grasp_dom_sf"/>
</dbReference>
<dbReference type="NCBIfam" id="TIGR01380">
    <property type="entry name" value="glut_syn"/>
    <property type="match status" value="1"/>
</dbReference>
<dbReference type="NCBIfam" id="NF003573">
    <property type="entry name" value="PRK05246.1"/>
    <property type="match status" value="1"/>
</dbReference>
<dbReference type="PANTHER" id="PTHR21621:SF4">
    <property type="entry name" value="GLUTATHIONE SYNTHETASE"/>
    <property type="match status" value="1"/>
</dbReference>
<dbReference type="PANTHER" id="PTHR21621">
    <property type="entry name" value="RIBOSOMAL PROTEIN S6 MODIFICATION PROTEIN"/>
    <property type="match status" value="1"/>
</dbReference>
<dbReference type="Pfam" id="PF02955">
    <property type="entry name" value="GSH-S_ATP"/>
    <property type="match status" value="1"/>
</dbReference>
<dbReference type="Pfam" id="PF02951">
    <property type="entry name" value="GSH-S_N"/>
    <property type="match status" value="1"/>
</dbReference>
<dbReference type="SUPFAM" id="SSF56059">
    <property type="entry name" value="Glutathione synthetase ATP-binding domain-like"/>
    <property type="match status" value="1"/>
</dbReference>
<dbReference type="SUPFAM" id="SSF52440">
    <property type="entry name" value="PreATP-grasp domain"/>
    <property type="match status" value="1"/>
</dbReference>
<dbReference type="PROSITE" id="PS50975">
    <property type="entry name" value="ATP_GRASP"/>
    <property type="match status" value="1"/>
</dbReference>
<organism>
    <name type="scientific">Buchnera aphidicola subsp. Baizongia pistaciae (strain Bp)</name>
    <dbReference type="NCBI Taxonomy" id="224915"/>
    <lineage>
        <taxon>Bacteria</taxon>
        <taxon>Pseudomonadati</taxon>
        <taxon>Pseudomonadota</taxon>
        <taxon>Gammaproteobacteria</taxon>
        <taxon>Enterobacterales</taxon>
        <taxon>Erwiniaceae</taxon>
        <taxon>Buchnera</taxon>
    </lineage>
</organism>
<protein>
    <recommendedName>
        <fullName evidence="2">Glutathione synthetase</fullName>
        <ecNumber evidence="2">6.3.2.3</ecNumber>
    </recommendedName>
    <alternativeName>
        <fullName evidence="2">GSH synthetase</fullName>
        <shortName evidence="2">GSH-S</shortName>
        <shortName evidence="2">GSHase</shortName>
    </alternativeName>
    <alternativeName>
        <fullName evidence="2">Glutathione synthase</fullName>
    </alternativeName>
</protein>
<proteinExistence type="inferred from homology"/>
<sequence>MTINLGIIMDPISSINIKKDSSFAILLEAQNRKYKIYYMELKDLYLKDNKPYSHTKLLRIKNNKKQWFTLEQQKDVSLSNLDVILMRKNPPINRAYIYATYILEQAERNGSYIINKPSSLRSYNEKLFTTTHFPQYIPKTLITSNSTKIHNFIKTYKDIIIKPLHGMAGLSIFRIKEHDPNTSVIIETMTKYETIPCISQNYITDIQKGDKRILIINGIPFPWCLARIPKKHENRGNLSIGGYGNTQKLSKNDWEIALSIAPTLNKKGIFFAGIDIIGTKLTEINITSPTCIQEIEQDTGISISTIILDNLEKNLKKRKTNRYL</sequence>
<comment type="catalytic activity">
    <reaction evidence="2">
        <text>gamma-L-glutamyl-L-cysteine + glycine + ATP = glutathione + ADP + phosphate + H(+)</text>
        <dbReference type="Rhea" id="RHEA:13557"/>
        <dbReference type="ChEBI" id="CHEBI:15378"/>
        <dbReference type="ChEBI" id="CHEBI:30616"/>
        <dbReference type="ChEBI" id="CHEBI:43474"/>
        <dbReference type="ChEBI" id="CHEBI:57305"/>
        <dbReference type="ChEBI" id="CHEBI:57925"/>
        <dbReference type="ChEBI" id="CHEBI:58173"/>
        <dbReference type="ChEBI" id="CHEBI:456216"/>
        <dbReference type="EC" id="6.3.2.3"/>
    </reaction>
</comment>
<comment type="cofactor">
    <cofactor evidence="1">
        <name>Mg(2+)</name>
        <dbReference type="ChEBI" id="CHEBI:18420"/>
    </cofactor>
    <cofactor evidence="1">
        <name>Mn(2+)</name>
        <dbReference type="ChEBI" id="CHEBI:29035"/>
    </cofactor>
    <text evidence="1">Binds 1 Mg(2+) or Mn(2+) ion per subunit.</text>
</comment>
<comment type="pathway">
    <text evidence="2">Sulfur metabolism; glutathione biosynthesis; glutathione from L-cysteine and L-glutamate: step 2/2.</text>
</comment>
<comment type="similarity">
    <text evidence="2">Belongs to the prokaryotic GSH synthase family.</text>
</comment>
<reference key="1">
    <citation type="journal article" date="2003" name="Proc. Natl. Acad. Sci. U.S.A.">
        <title>Reductive genome evolution in Buchnera aphidicola.</title>
        <authorList>
            <person name="van Ham R.C.H.J."/>
            <person name="Kamerbeek J."/>
            <person name="Palacios C."/>
            <person name="Rausell C."/>
            <person name="Abascal F."/>
            <person name="Bastolla U."/>
            <person name="Fernandez J.M."/>
            <person name="Jimenez L."/>
            <person name="Postigo M."/>
            <person name="Silva F.J."/>
            <person name="Tamames J."/>
            <person name="Viguera E."/>
            <person name="Latorre A."/>
            <person name="Valencia A."/>
            <person name="Moran F."/>
            <person name="Moya A."/>
        </authorList>
    </citation>
    <scope>NUCLEOTIDE SEQUENCE [LARGE SCALE GENOMIC DNA]</scope>
    <source>
        <strain>Bp</strain>
    </source>
</reference>
<feature type="chain" id="PRO_0000197461" description="Glutathione synthetase">
    <location>
        <begin position="1"/>
        <end position="324"/>
    </location>
</feature>
<feature type="domain" description="ATP-grasp" evidence="2">
    <location>
        <begin position="125"/>
        <end position="312"/>
    </location>
</feature>
<feature type="binding site" evidence="2">
    <location>
        <begin position="152"/>
        <end position="209"/>
    </location>
    <ligand>
        <name>ATP</name>
        <dbReference type="ChEBI" id="CHEBI:30616"/>
    </ligand>
</feature>
<feature type="binding site" evidence="2">
    <location>
        <position position="283"/>
    </location>
    <ligand>
        <name>Mg(2+)</name>
        <dbReference type="ChEBI" id="CHEBI:18420"/>
    </ligand>
</feature>
<feature type="binding site" evidence="2">
    <location>
        <position position="285"/>
    </location>
    <ligand>
        <name>Mg(2+)</name>
        <dbReference type="ChEBI" id="CHEBI:18420"/>
    </ligand>
</feature>
<keyword id="KW-0067">ATP-binding</keyword>
<keyword id="KW-0317">Glutathione biosynthesis</keyword>
<keyword id="KW-0436">Ligase</keyword>
<keyword id="KW-0460">Magnesium</keyword>
<keyword id="KW-0464">Manganese</keyword>
<keyword id="KW-0479">Metal-binding</keyword>
<keyword id="KW-0547">Nucleotide-binding</keyword>
<keyword id="KW-1185">Reference proteome</keyword>
<accession>P59495</accession>
<gene>
    <name evidence="2" type="primary">gshB</name>
    <name type="ordered locus">bbp_490</name>
</gene>
<evidence type="ECO:0000250" key="1"/>
<evidence type="ECO:0000255" key="2">
    <source>
        <dbReference type="HAMAP-Rule" id="MF_00162"/>
    </source>
</evidence>
<name>GSHB_BUCBP</name>